<protein>
    <recommendedName>
        <fullName evidence="1">D-tagatose-1,6-bisphosphate aldolase subunit GatZ</fullName>
    </recommendedName>
</protein>
<evidence type="ECO:0000255" key="1">
    <source>
        <dbReference type="HAMAP-Rule" id="MF_01296"/>
    </source>
</evidence>
<organism>
    <name type="scientific">Salmonella gallinarum (strain 287/91 / NCTC 13346)</name>
    <dbReference type="NCBI Taxonomy" id="550538"/>
    <lineage>
        <taxon>Bacteria</taxon>
        <taxon>Pseudomonadati</taxon>
        <taxon>Pseudomonadota</taxon>
        <taxon>Gammaproteobacteria</taxon>
        <taxon>Enterobacterales</taxon>
        <taxon>Enterobacteriaceae</taxon>
        <taxon>Salmonella</taxon>
    </lineage>
</organism>
<keyword id="KW-0298">Galactitol metabolism</keyword>
<accession>B5REK7</accession>
<reference key="1">
    <citation type="journal article" date="2008" name="Genome Res.">
        <title>Comparative genome analysis of Salmonella enteritidis PT4 and Salmonella gallinarum 287/91 provides insights into evolutionary and host adaptation pathways.</title>
        <authorList>
            <person name="Thomson N.R."/>
            <person name="Clayton D.J."/>
            <person name="Windhorst D."/>
            <person name="Vernikos G."/>
            <person name="Davidson S."/>
            <person name="Churcher C."/>
            <person name="Quail M.A."/>
            <person name="Stevens M."/>
            <person name="Jones M.A."/>
            <person name="Watson M."/>
            <person name="Barron A."/>
            <person name="Layton A."/>
            <person name="Pickard D."/>
            <person name="Kingsley R.A."/>
            <person name="Bignell A."/>
            <person name="Clark L."/>
            <person name="Harris B."/>
            <person name="Ormond D."/>
            <person name="Abdellah Z."/>
            <person name="Brooks K."/>
            <person name="Cherevach I."/>
            <person name="Chillingworth T."/>
            <person name="Woodward J."/>
            <person name="Norberczak H."/>
            <person name="Lord A."/>
            <person name="Arrowsmith C."/>
            <person name="Jagels K."/>
            <person name="Moule S."/>
            <person name="Mungall K."/>
            <person name="Saunders M."/>
            <person name="Whitehead S."/>
            <person name="Chabalgoity J.A."/>
            <person name="Maskell D."/>
            <person name="Humphreys T."/>
            <person name="Roberts M."/>
            <person name="Barrow P.A."/>
            <person name="Dougan G."/>
            <person name="Parkhill J."/>
        </authorList>
    </citation>
    <scope>NUCLEOTIDE SEQUENCE [LARGE SCALE GENOMIC DNA]</scope>
    <source>
        <strain>287/91 / NCTC 13346</strain>
    </source>
</reference>
<feature type="chain" id="PRO_0000372511" description="D-tagatose-1,6-bisphosphate aldolase subunit GatZ">
    <location>
        <begin position="1"/>
        <end position="423"/>
    </location>
</feature>
<gene>
    <name evidence="1" type="primary">gatZ</name>
    <name type="ordered locus">SG3148</name>
</gene>
<proteinExistence type="inferred from homology"/>
<name>GATZ_SALG2</name>
<dbReference type="EMBL" id="AM933173">
    <property type="protein sequence ID" value="CAR38947.1"/>
    <property type="molecule type" value="Genomic_DNA"/>
</dbReference>
<dbReference type="RefSeq" id="WP_001674887.1">
    <property type="nucleotide sequence ID" value="NC_011274.1"/>
</dbReference>
<dbReference type="SMR" id="B5REK7"/>
<dbReference type="KEGG" id="seg:SG3148"/>
<dbReference type="HOGENOM" id="CLU_053334_0_0_6"/>
<dbReference type="UniPathway" id="UPA00704">
    <property type="reaction ID" value="UER00716"/>
</dbReference>
<dbReference type="Proteomes" id="UP000008321">
    <property type="component" value="Chromosome"/>
</dbReference>
<dbReference type="GO" id="GO:0005886">
    <property type="term" value="C:plasma membrane"/>
    <property type="evidence" value="ECO:0007669"/>
    <property type="project" value="TreeGrafter"/>
</dbReference>
<dbReference type="GO" id="GO:2001059">
    <property type="term" value="P:D-tagatose 6-phosphate catabolic process"/>
    <property type="evidence" value="ECO:0007669"/>
    <property type="project" value="UniProtKB-UniRule"/>
</dbReference>
<dbReference type="GO" id="GO:0019402">
    <property type="term" value="P:galactitol metabolic process"/>
    <property type="evidence" value="ECO:0007669"/>
    <property type="project" value="UniProtKB-KW"/>
</dbReference>
<dbReference type="GO" id="GO:0009401">
    <property type="term" value="P:phosphoenolpyruvate-dependent sugar phosphotransferase system"/>
    <property type="evidence" value="ECO:0007669"/>
    <property type="project" value="TreeGrafter"/>
</dbReference>
<dbReference type="FunFam" id="1.10.400.20:FF:000001">
    <property type="entry name" value="D-tagatose-1,6-bisphosphate aldolase subunit GatZ"/>
    <property type="match status" value="1"/>
</dbReference>
<dbReference type="FunFam" id="3.20.20.70:FF:000141">
    <property type="entry name" value="D-tagatose-1,6-bisphosphate aldolase subunit GatZ"/>
    <property type="match status" value="1"/>
</dbReference>
<dbReference type="Gene3D" id="3.20.20.70">
    <property type="entry name" value="Aldolase class I"/>
    <property type="match status" value="1"/>
</dbReference>
<dbReference type="Gene3D" id="1.10.400.20">
    <property type="entry name" value="putative tagatose 6-phosphate kinase domain like"/>
    <property type="match status" value="1"/>
</dbReference>
<dbReference type="HAMAP" id="MF_01296">
    <property type="entry name" value="Tagatose_aldol_GatZ"/>
    <property type="match status" value="1"/>
</dbReference>
<dbReference type="InterPro" id="IPR013785">
    <property type="entry name" value="Aldolase_TIM"/>
</dbReference>
<dbReference type="InterPro" id="IPR012062">
    <property type="entry name" value="GatZ/KbaZ-like"/>
</dbReference>
<dbReference type="InterPro" id="IPR050303">
    <property type="entry name" value="GatZ_KbaZ_carbometab"/>
</dbReference>
<dbReference type="InterPro" id="IPR023436">
    <property type="entry name" value="TagBP_ald_GatZ"/>
</dbReference>
<dbReference type="NCBIfam" id="TIGR02810">
    <property type="entry name" value="agaZ_gatZ"/>
    <property type="match status" value="1"/>
</dbReference>
<dbReference type="NCBIfam" id="NF011626">
    <property type="entry name" value="PRK15052.1"/>
    <property type="match status" value="1"/>
</dbReference>
<dbReference type="PANTHER" id="PTHR32502:SF12">
    <property type="entry name" value="D-TAGATOSE-1,6-BISPHOSPHATE ALDOLASE SUBUNIT GATZ"/>
    <property type="match status" value="1"/>
</dbReference>
<dbReference type="PANTHER" id="PTHR32502">
    <property type="entry name" value="N-ACETYLGALACTOSAMINE PERMEASE II COMPONENT-RELATED"/>
    <property type="match status" value="1"/>
</dbReference>
<dbReference type="Pfam" id="PF08013">
    <property type="entry name" value="GatZ_KbaZ-like"/>
    <property type="match status" value="1"/>
</dbReference>
<dbReference type="PIRSF" id="PIRSF009264">
    <property type="entry name" value="TagBP_ald_AgaZ"/>
    <property type="match status" value="1"/>
</dbReference>
<dbReference type="SUPFAM" id="SSF51569">
    <property type="entry name" value="Aldolase"/>
    <property type="match status" value="1"/>
</dbReference>
<sequence length="423" mass="47320">MKEIISRHKAGEQIGICSVCSAHPLVIESALRFDLNSGNKVLIEATSNQVNQFGGYTGMKPADFRDFVYGIAQEVGFPRERLILGGDHLGPNCWQNEPADTAMEKSVELIKAYVAAGFSKIHLDASMSFADDPTPLDPMVVAKRAALLCQAAETTATDEQKRHLTYVIGTEVPVPGGEASAINAVHVTREQDAARTLQTHQAAFRALGLDEALNRVIAIVVQPGVEFDHTQIIHYQPQAAQALSAWIKETPMVYEAHSTDYQTRQAYRALVRDHYAILKVGPALTFALREAIFALAQMENELISPEQRSRVLEVIDEVMLNEPGYWKKYYRPTWSQAMVDIHFSLSDRIRYYWPHPRIRQSVEKLIANLNNVTLPLGLISQFMPVQFERLSEGVLTPTPHNLIIDKIQDVLRAYRFGCTPDVA</sequence>
<comment type="function">
    <text evidence="1">Component of the tagatose-1,6-bisphosphate aldolase GatYZ that is required for full activity and stability of the Y subunit. Could have a chaperone-like function for the proper and stable folding of GatY. When expressed alone, GatZ does not show any aldolase activity. Is involved in the catabolism of galactitol.</text>
</comment>
<comment type="pathway">
    <text evidence="1">Carbohydrate metabolism; D-tagatose 6-phosphate degradation; D-glyceraldehyde 3-phosphate and glycerone phosphate from D-tagatose 6-phosphate: step 2/2.</text>
</comment>
<comment type="subunit">
    <text evidence="1">Forms a complex with GatY.</text>
</comment>
<comment type="similarity">
    <text evidence="1">Belongs to the GatZ/KbaZ family. GatZ subfamily.</text>
</comment>